<protein>
    <recommendedName>
        <fullName evidence="1">Acetaldehyde dehydrogenase 3</fullName>
        <ecNumber evidence="1">1.2.1.10</ecNumber>
    </recommendedName>
    <alternativeName>
        <fullName evidence="1">Acetaldehyde dehydrogenase [acetylating] 3</fullName>
    </alternativeName>
</protein>
<keyword id="KW-0058">Aromatic hydrocarbons catabolism</keyword>
<keyword id="KW-0520">NAD</keyword>
<keyword id="KW-0560">Oxidoreductase</keyword>
<comment type="catalytic activity">
    <reaction evidence="1">
        <text>acetaldehyde + NAD(+) + CoA = acetyl-CoA + NADH + H(+)</text>
        <dbReference type="Rhea" id="RHEA:23288"/>
        <dbReference type="ChEBI" id="CHEBI:15343"/>
        <dbReference type="ChEBI" id="CHEBI:15378"/>
        <dbReference type="ChEBI" id="CHEBI:57287"/>
        <dbReference type="ChEBI" id="CHEBI:57288"/>
        <dbReference type="ChEBI" id="CHEBI:57540"/>
        <dbReference type="ChEBI" id="CHEBI:57945"/>
        <dbReference type="EC" id="1.2.1.10"/>
    </reaction>
</comment>
<comment type="similarity">
    <text evidence="1">Belongs to the acetaldehyde dehydrogenase family.</text>
</comment>
<sequence>MTRKIRCALIGPGNIGTDLLAKLMRSPVLEPVWMVGIDPDSDGLKRARELGLKTTAEGVDGLLPHVQADAVQIAFDATSAYVHAENSRKLNALGVLMIDLTPAAIGPYCVPPVNLMDHIGSGEMNVNMVTCGGQATIPMVRAVSRVQPVAYGEIVATVSSRSVGPGTRKNIDEFTRTTAAAVAQVGGAKDGKAIIVINPADPPLIMRDTVHCLTETAPDEARIVESVHAMIADVQRYVPGYRLVNGPVFDGNRVSIYLEVEGLGDYLPKYAGNLDIMTAAAARTAEMFAEELLAGRLALQPAAQAA</sequence>
<dbReference type="EC" id="1.2.1.10" evidence="1"/>
<dbReference type="EMBL" id="CP000152">
    <property type="protein sequence ID" value="ABB13071.1"/>
    <property type="molecule type" value="Genomic_DNA"/>
</dbReference>
<dbReference type="RefSeq" id="WP_011356550.1">
    <property type="nucleotide sequence ID" value="NC_007511.1"/>
</dbReference>
<dbReference type="SMR" id="Q390P5"/>
<dbReference type="GeneID" id="45099263"/>
<dbReference type="KEGG" id="bur:Bcep18194_B2960"/>
<dbReference type="PATRIC" id="fig|482957.22.peg.6782"/>
<dbReference type="HOGENOM" id="CLU_062208_0_0_4"/>
<dbReference type="Proteomes" id="UP000002705">
    <property type="component" value="Chromosome 2"/>
</dbReference>
<dbReference type="GO" id="GO:0008774">
    <property type="term" value="F:acetaldehyde dehydrogenase (acetylating) activity"/>
    <property type="evidence" value="ECO:0007669"/>
    <property type="project" value="UniProtKB-UniRule"/>
</dbReference>
<dbReference type="GO" id="GO:0051287">
    <property type="term" value="F:NAD binding"/>
    <property type="evidence" value="ECO:0007669"/>
    <property type="project" value="UniProtKB-UniRule"/>
</dbReference>
<dbReference type="GO" id="GO:0009056">
    <property type="term" value="P:catabolic process"/>
    <property type="evidence" value="ECO:0007669"/>
    <property type="project" value="UniProtKB-KW"/>
</dbReference>
<dbReference type="CDD" id="cd23933">
    <property type="entry name" value="ALDH_C"/>
    <property type="match status" value="1"/>
</dbReference>
<dbReference type="Gene3D" id="3.30.360.10">
    <property type="entry name" value="Dihydrodipicolinate Reductase, domain 2"/>
    <property type="match status" value="1"/>
</dbReference>
<dbReference type="Gene3D" id="3.40.50.720">
    <property type="entry name" value="NAD(P)-binding Rossmann-like Domain"/>
    <property type="match status" value="1"/>
</dbReference>
<dbReference type="HAMAP" id="MF_01657">
    <property type="entry name" value="Ac_ald_DH_ac"/>
    <property type="match status" value="1"/>
</dbReference>
<dbReference type="InterPro" id="IPR003361">
    <property type="entry name" value="Acetaldehyde_dehydrogenase"/>
</dbReference>
<dbReference type="InterPro" id="IPR015426">
    <property type="entry name" value="Acetylaldehyde_DH_C"/>
</dbReference>
<dbReference type="InterPro" id="IPR036291">
    <property type="entry name" value="NAD(P)-bd_dom_sf"/>
</dbReference>
<dbReference type="InterPro" id="IPR000534">
    <property type="entry name" value="Semialdehyde_DH_NAD-bd"/>
</dbReference>
<dbReference type="NCBIfam" id="TIGR03215">
    <property type="entry name" value="ac_ald_DH_ac"/>
    <property type="match status" value="1"/>
</dbReference>
<dbReference type="NCBIfam" id="NF006157">
    <property type="entry name" value="PRK08300.1"/>
    <property type="match status" value="1"/>
</dbReference>
<dbReference type="Pfam" id="PF09290">
    <property type="entry name" value="AcetDehyd-dimer"/>
    <property type="match status" value="1"/>
</dbReference>
<dbReference type="PIRSF" id="PIRSF015689">
    <property type="entry name" value="Actaldh_dh_actl"/>
    <property type="match status" value="1"/>
</dbReference>
<dbReference type="SMART" id="SM00859">
    <property type="entry name" value="Semialdhyde_dh"/>
    <property type="match status" value="1"/>
</dbReference>
<dbReference type="SUPFAM" id="SSF55347">
    <property type="entry name" value="Glyceraldehyde-3-phosphate dehydrogenase-like, C-terminal domain"/>
    <property type="match status" value="1"/>
</dbReference>
<dbReference type="SUPFAM" id="SSF51735">
    <property type="entry name" value="NAD(P)-binding Rossmann-fold domains"/>
    <property type="match status" value="1"/>
</dbReference>
<accession>Q390P5</accession>
<organism>
    <name type="scientific">Burkholderia lata (strain ATCC 17760 / DSM 23089 / LMG 22485 / NCIMB 9086 / R18194 / 383)</name>
    <dbReference type="NCBI Taxonomy" id="482957"/>
    <lineage>
        <taxon>Bacteria</taxon>
        <taxon>Pseudomonadati</taxon>
        <taxon>Pseudomonadota</taxon>
        <taxon>Betaproteobacteria</taxon>
        <taxon>Burkholderiales</taxon>
        <taxon>Burkholderiaceae</taxon>
        <taxon>Burkholderia</taxon>
        <taxon>Burkholderia cepacia complex</taxon>
    </lineage>
</organism>
<reference key="1">
    <citation type="submission" date="2005-10" db="EMBL/GenBank/DDBJ databases">
        <title>Complete sequence of chromosome 2 of Burkholderia sp. 383.</title>
        <authorList>
            <consortium name="US DOE Joint Genome Institute"/>
            <person name="Copeland A."/>
            <person name="Lucas S."/>
            <person name="Lapidus A."/>
            <person name="Barry K."/>
            <person name="Detter J.C."/>
            <person name="Glavina T."/>
            <person name="Hammon N."/>
            <person name="Israni S."/>
            <person name="Pitluck S."/>
            <person name="Chain P."/>
            <person name="Malfatti S."/>
            <person name="Shin M."/>
            <person name="Vergez L."/>
            <person name="Schmutz J."/>
            <person name="Larimer F."/>
            <person name="Land M."/>
            <person name="Kyrpides N."/>
            <person name="Lykidis A."/>
            <person name="Richardson P."/>
        </authorList>
    </citation>
    <scope>NUCLEOTIDE SEQUENCE [LARGE SCALE GENOMIC DNA]</scope>
    <source>
        <strain>ATCC 17760 / DSM 23089 / LMG 22485 / NCIMB 9086 / R18194 / 383</strain>
    </source>
</reference>
<feature type="chain" id="PRO_0000387640" description="Acetaldehyde dehydrogenase 3">
    <location>
        <begin position="1"/>
        <end position="306"/>
    </location>
</feature>
<feature type="active site" description="Acyl-thioester intermediate" evidence="1">
    <location>
        <position position="131"/>
    </location>
</feature>
<feature type="binding site" evidence="1">
    <location>
        <begin position="162"/>
        <end position="170"/>
    </location>
    <ligand>
        <name>NAD(+)</name>
        <dbReference type="ChEBI" id="CHEBI:57540"/>
    </ligand>
</feature>
<feature type="binding site" evidence="1">
    <location>
        <position position="273"/>
    </location>
    <ligand>
        <name>NAD(+)</name>
        <dbReference type="ChEBI" id="CHEBI:57540"/>
    </ligand>
</feature>
<proteinExistence type="inferred from homology"/>
<gene>
    <name type="ordered locus">Bcep18194_B2960</name>
</gene>
<name>ACDH3_BURL3</name>
<evidence type="ECO:0000255" key="1">
    <source>
        <dbReference type="HAMAP-Rule" id="MF_01657"/>
    </source>
</evidence>